<evidence type="ECO:0000255" key="1">
    <source>
        <dbReference type="HAMAP-Rule" id="MF_01393"/>
    </source>
</evidence>
<gene>
    <name evidence="1" type="primary">atpB</name>
    <name type="ordered locus">COXBURSA331_A2142</name>
</gene>
<dbReference type="EMBL" id="CP000890">
    <property type="protein sequence ID" value="ABX79013.1"/>
    <property type="molecule type" value="Genomic_DNA"/>
</dbReference>
<dbReference type="RefSeq" id="WP_012220870.1">
    <property type="nucleotide sequence ID" value="NC_010117.1"/>
</dbReference>
<dbReference type="SMR" id="A9NBC4"/>
<dbReference type="KEGG" id="cbs:COXBURSA331_A2142"/>
<dbReference type="HOGENOM" id="CLU_041018_1_0_6"/>
<dbReference type="GO" id="GO:0005886">
    <property type="term" value="C:plasma membrane"/>
    <property type="evidence" value="ECO:0007669"/>
    <property type="project" value="UniProtKB-SubCell"/>
</dbReference>
<dbReference type="GO" id="GO:0045259">
    <property type="term" value="C:proton-transporting ATP synthase complex"/>
    <property type="evidence" value="ECO:0007669"/>
    <property type="project" value="UniProtKB-KW"/>
</dbReference>
<dbReference type="GO" id="GO:0046933">
    <property type="term" value="F:proton-transporting ATP synthase activity, rotational mechanism"/>
    <property type="evidence" value="ECO:0007669"/>
    <property type="project" value="UniProtKB-UniRule"/>
</dbReference>
<dbReference type="GO" id="GO:0042777">
    <property type="term" value="P:proton motive force-driven plasma membrane ATP synthesis"/>
    <property type="evidence" value="ECO:0007669"/>
    <property type="project" value="TreeGrafter"/>
</dbReference>
<dbReference type="CDD" id="cd00310">
    <property type="entry name" value="ATP-synt_Fo_a_6"/>
    <property type="match status" value="1"/>
</dbReference>
<dbReference type="FunFam" id="1.20.120.220:FF:000002">
    <property type="entry name" value="ATP synthase subunit a"/>
    <property type="match status" value="1"/>
</dbReference>
<dbReference type="Gene3D" id="1.20.120.220">
    <property type="entry name" value="ATP synthase, F0 complex, subunit A"/>
    <property type="match status" value="1"/>
</dbReference>
<dbReference type="HAMAP" id="MF_01393">
    <property type="entry name" value="ATP_synth_a_bact"/>
    <property type="match status" value="1"/>
</dbReference>
<dbReference type="InterPro" id="IPR045082">
    <property type="entry name" value="ATP_syn_F0_a_bact/chloroplast"/>
</dbReference>
<dbReference type="InterPro" id="IPR000568">
    <property type="entry name" value="ATP_synth_F0_asu"/>
</dbReference>
<dbReference type="InterPro" id="IPR023011">
    <property type="entry name" value="ATP_synth_F0_asu_AS"/>
</dbReference>
<dbReference type="InterPro" id="IPR035908">
    <property type="entry name" value="F0_ATP_A_sf"/>
</dbReference>
<dbReference type="NCBIfam" id="TIGR01131">
    <property type="entry name" value="ATP_synt_6_or_A"/>
    <property type="match status" value="1"/>
</dbReference>
<dbReference type="NCBIfam" id="NF004477">
    <property type="entry name" value="PRK05815.1-1"/>
    <property type="match status" value="1"/>
</dbReference>
<dbReference type="PANTHER" id="PTHR42823">
    <property type="entry name" value="ATP SYNTHASE SUBUNIT A, CHLOROPLASTIC"/>
    <property type="match status" value="1"/>
</dbReference>
<dbReference type="PANTHER" id="PTHR42823:SF3">
    <property type="entry name" value="ATP SYNTHASE SUBUNIT A, CHLOROPLASTIC"/>
    <property type="match status" value="1"/>
</dbReference>
<dbReference type="Pfam" id="PF00119">
    <property type="entry name" value="ATP-synt_A"/>
    <property type="match status" value="1"/>
</dbReference>
<dbReference type="PRINTS" id="PR00123">
    <property type="entry name" value="ATPASEA"/>
</dbReference>
<dbReference type="SUPFAM" id="SSF81336">
    <property type="entry name" value="F1F0 ATP synthase subunit A"/>
    <property type="match status" value="1"/>
</dbReference>
<dbReference type="PROSITE" id="PS00449">
    <property type="entry name" value="ATPASE_A"/>
    <property type="match status" value="1"/>
</dbReference>
<keyword id="KW-0066">ATP synthesis</keyword>
<keyword id="KW-0997">Cell inner membrane</keyword>
<keyword id="KW-1003">Cell membrane</keyword>
<keyword id="KW-0138">CF(0)</keyword>
<keyword id="KW-0375">Hydrogen ion transport</keyword>
<keyword id="KW-0406">Ion transport</keyword>
<keyword id="KW-0472">Membrane</keyword>
<keyword id="KW-0812">Transmembrane</keyword>
<keyword id="KW-1133">Transmembrane helix</keyword>
<keyword id="KW-0813">Transport</keyword>
<name>ATP6_COXBR</name>
<feature type="chain" id="PRO_0000362279" description="ATP synthase subunit a">
    <location>
        <begin position="1"/>
        <end position="264"/>
    </location>
</feature>
<feature type="transmembrane region" description="Helical" evidence="1">
    <location>
        <begin position="39"/>
        <end position="59"/>
    </location>
</feature>
<feature type="transmembrane region" description="Helical" evidence="1">
    <location>
        <begin position="97"/>
        <end position="117"/>
    </location>
</feature>
<feature type="transmembrane region" description="Helical" evidence="1">
    <location>
        <begin position="139"/>
        <end position="159"/>
    </location>
</feature>
<feature type="transmembrane region" description="Helical" evidence="1">
    <location>
        <begin position="205"/>
        <end position="225"/>
    </location>
</feature>
<feature type="transmembrane region" description="Helical" evidence="1">
    <location>
        <begin position="239"/>
        <end position="259"/>
    </location>
</feature>
<organism>
    <name type="scientific">Coxiella burnetii (strain RSA 331 / Henzerling II)</name>
    <dbReference type="NCBI Taxonomy" id="360115"/>
    <lineage>
        <taxon>Bacteria</taxon>
        <taxon>Pseudomonadati</taxon>
        <taxon>Pseudomonadota</taxon>
        <taxon>Gammaproteobacteria</taxon>
        <taxon>Legionellales</taxon>
        <taxon>Coxiellaceae</taxon>
        <taxon>Coxiella</taxon>
    </lineage>
</organism>
<reference key="1">
    <citation type="submission" date="2007-11" db="EMBL/GenBank/DDBJ databases">
        <title>Genome sequencing of phylogenetically and phenotypically diverse Coxiella burnetii isolates.</title>
        <authorList>
            <person name="Seshadri R."/>
            <person name="Samuel J.E."/>
        </authorList>
    </citation>
    <scope>NUCLEOTIDE SEQUENCE [LARGE SCALE GENOMIC DNA]</scope>
    <source>
        <strain>RSA 331 / Henzerling II</strain>
    </source>
</reference>
<proteinExistence type="inferred from homology"/>
<protein>
    <recommendedName>
        <fullName evidence="1">ATP synthase subunit a</fullName>
    </recommendedName>
    <alternativeName>
        <fullName evidence="1">ATP synthase F0 sector subunit a</fullName>
    </alternativeName>
    <alternativeName>
        <fullName evidence="1">F-ATPase subunit 6</fullName>
    </alternativeName>
</protein>
<accession>A9NBC4</accession>
<comment type="function">
    <text evidence="1">Key component of the proton channel; it plays a direct role in the translocation of protons across the membrane.</text>
</comment>
<comment type="subunit">
    <text evidence="1">F-type ATPases have 2 components, CF(1) - the catalytic core - and CF(0) - the membrane proton channel. CF(1) has five subunits: alpha(3), beta(3), gamma(1), delta(1), epsilon(1). CF(0) has three main subunits: a(1), b(2) and c(9-12). The alpha and beta chains form an alternating ring which encloses part of the gamma chain. CF(1) is attached to CF(0) by a central stalk formed by the gamma and epsilon chains, while a peripheral stalk is formed by the delta and b chains.</text>
</comment>
<comment type="subcellular location">
    <subcellularLocation>
        <location evidence="1">Cell inner membrane</location>
        <topology evidence="1">Multi-pass membrane protein</topology>
    </subcellularLocation>
</comment>
<comment type="similarity">
    <text evidence="1">Belongs to the ATPase A chain family.</text>
</comment>
<sequence length="264" mass="29892">MYAQPKLTSAEYVQHHMSHWKLNLYNFTFTDGGFWTLNLDTLIISVVLGALFILIFYIVARRATASVPGKWQNAIEMAVEAVDGTVKDSFHGDRSLVAPLALTIFIWVFLMNFMDLVPVDLIPRLFQMGGVEHFKAVPTADPTLTFAMSITVFVLVIFYNFKMKGAIGLGKEVLSRPFGWYLMPINVIFRLIDEGVKPISLALRLFGNLFAGELIFILIALLPWWSQFTLGMVWTLFHLLVITVQAFIFMMLTVVYISLAAESH</sequence>